<protein>
    <recommendedName>
        <fullName evidence="1">Urease subunit gamma</fullName>
        <ecNumber evidence="1">3.5.1.5</ecNumber>
    </recommendedName>
    <alternativeName>
        <fullName evidence="1">Urea amidohydrolase subunit gamma</fullName>
    </alternativeName>
</protein>
<feature type="chain" id="PRO_0000098008" description="Urease subunit gamma">
    <location>
        <begin position="1"/>
        <end position="100"/>
    </location>
</feature>
<accession>P94667</accession>
<gene>
    <name evidence="1" type="primary">ureA</name>
</gene>
<comment type="catalytic activity">
    <reaction evidence="1">
        <text>urea + 2 H2O + H(+) = hydrogencarbonate + 2 NH4(+)</text>
        <dbReference type="Rhea" id="RHEA:20557"/>
        <dbReference type="ChEBI" id="CHEBI:15377"/>
        <dbReference type="ChEBI" id="CHEBI:15378"/>
        <dbReference type="ChEBI" id="CHEBI:16199"/>
        <dbReference type="ChEBI" id="CHEBI:17544"/>
        <dbReference type="ChEBI" id="CHEBI:28938"/>
        <dbReference type="EC" id="3.5.1.5"/>
    </reaction>
</comment>
<comment type="pathway">
    <text evidence="1">Nitrogen metabolism; urea degradation; CO(2) and NH(3) from urea (urease route): step 1/1.</text>
</comment>
<comment type="subunit">
    <text evidence="1">Heterotrimer of UreA (gamma), UreB (beta) and UreC (alpha) subunits. Three heterotrimers associate to form the active enzyme.</text>
</comment>
<comment type="subcellular location">
    <subcellularLocation>
        <location evidence="1">Cytoplasm</location>
    </subcellularLocation>
</comment>
<comment type="similarity">
    <text evidence="1">Belongs to the urease gamma subunit family.</text>
</comment>
<name>URE3_CLOPF</name>
<keyword id="KW-0963">Cytoplasm</keyword>
<keyword id="KW-0378">Hydrolase</keyword>
<keyword id="KW-0614">Plasmid</keyword>
<geneLocation type="plasmid"/>
<proteinExistence type="inferred from homology"/>
<organism>
    <name type="scientific">Clostridium perfringens</name>
    <dbReference type="NCBI Taxonomy" id="1502"/>
    <lineage>
        <taxon>Bacteria</taxon>
        <taxon>Bacillati</taxon>
        <taxon>Bacillota</taxon>
        <taxon>Clostridia</taxon>
        <taxon>Eubacteriales</taxon>
        <taxon>Clostridiaceae</taxon>
        <taxon>Clostridium</taxon>
    </lineage>
</organism>
<sequence>MYLTTKEKEKLMISVVAEIARKRQARGLKLNYPEAVAIITDAILEGARDGKLVKDLMSYGRTILKREDVMEGVPEMIEMVQVEATFLDGTKLVTVHNPIQ</sequence>
<evidence type="ECO:0000255" key="1">
    <source>
        <dbReference type="HAMAP-Rule" id="MF_00739"/>
    </source>
</evidence>
<reference key="1">
    <citation type="journal article" date="1997" name="Infect. Immun.">
        <title>Clostridium perfringens urease genes are plasmid borne.</title>
        <authorList>
            <person name="Dupuy B."/>
            <person name="Daube G."/>
            <person name="Popoff M.R."/>
            <person name="Cole S.T."/>
        </authorList>
    </citation>
    <scope>NUCLEOTIDE SEQUENCE [GENOMIC DNA]</scope>
    <source>
        <strain>CP76</strain>
    </source>
</reference>
<dbReference type="EC" id="3.5.1.5" evidence="1"/>
<dbReference type="EMBL" id="Y10356">
    <property type="protein sequence ID" value="CAA71383.1"/>
    <property type="molecule type" value="Genomic_DNA"/>
</dbReference>
<dbReference type="RefSeq" id="WP_042266546.1">
    <property type="nucleotide sequence ID" value="NZ_JAVVAF010000034.1"/>
</dbReference>
<dbReference type="SMR" id="P94667"/>
<dbReference type="UniPathway" id="UPA00258">
    <property type="reaction ID" value="UER00370"/>
</dbReference>
<dbReference type="GO" id="GO:0005737">
    <property type="term" value="C:cytoplasm"/>
    <property type="evidence" value="ECO:0007669"/>
    <property type="project" value="UniProtKB-SubCell"/>
</dbReference>
<dbReference type="GO" id="GO:0016151">
    <property type="term" value="F:nickel cation binding"/>
    <property type="evidence" value="ECO:0007669"/>
    <property type="project" value="InterPro"/>
</dbReference>
<dbReference type="GO" id="GO:0009039">
    <property type="term" value="F:urease activity"/>
    <property type="evidence" value="ECO:0007669"/>
    <property type="project" value="UniProtKB-UniRule"/>
</dbReference>
<dbReference type="GO" id="GO:0043419">
    <property type="term" value="P:urea catabolic process"/>
    <property type="evidence" value="ECO:0007669"/>
    <property type="project" value="UniProtKB-UniRule"/>
</dbReference>
<dbReference type="CDD" id="cd00390">
    <property type="entry name" value="Urease_gamma"/>
    <property type="match status" value="1"/>
</dbReference>
<dbReference type="Gene3D" id="3.30.280.10">
    <property type="entry name" value="Urease, gamma-like subunit"/>
    <property type="match status" value="1"/>
</dbReference>
<dbReference type="HAMAP" id="MF_00739">
    <property type="entry name" value="Urease_gamma"/>
    <property type="match status" value="1"/>
</dbReference>
<dbReference type="InterPro" id="IPR012010">
    <property type="entry name" value="Urease_gamma"/>
</dbReference>
<dbReference type="InterPro" id="IPR002026">
    <property type="entry name" value="Urease_gamma/gamma-beta_su"/>
</dbReference>
<dbReference type="InterPro" id="IPR036463">
    <property type="entry name" value="Urease_gamma_sf"/>
</dbReference>
<dbReference type="InterPro" id="IPR050069">
    <property type="entry name" value="Urease_subunit"/>
</dbReference>
<dbReference type="NCBIfam" id="NF009712">
    <property type="entry name" value="PRK13241.1"/>
    <property type="match status" value="1"/>
</dbReference>
<dbReference type="NCBIfam" id="TIGR00193">
    <property type="entry name" value="urease_gam"/>
    <property type="match status" value="1"/>
</dbReference>
<dbReference type="PANTHER" id="PTHR33569">
    <property type="entry name" value="UREASE"/>
    <property type="match status" value="1"/>
</dbReference>
<dbReference type="PANTHER" id="PTHR33569:SF1">
    <property type="entry name" value="UREASE"/>
    <property type="match status" value="1"/>
</dbReference>
<dbReference type="Pfam" id="PF00547">
    <property type="entry name" value="Urease_gamma"/>
    <property type="match status" value="1"/>
</dbReference>
<dbReference type="PIRSF" id="PIRSF001223">
    <property type="entry name" value="Urease_gamma"/>
    <property type="match status" value="1"/>
</dbReference>
<dbReference type="SUPFAM" id="SSF54111">
    <property type="entry name" value="Urease, gamma-subunit"/>
    <property type="match status" value="1"/>
</dbReference>